<name>TPPC5_DICDI</name>
<comment type="function">
    <text evidence="1">May play a role in vesicular transport from endoplasmic reticulum to Golgi.</text>
</comment>
<comment type="subunit">
    <text evidence="1">Part of the multisubunit TRAPP (transport protein particle) complex.</text>
</comment>
<comment type="subcellular location">
    <subcellularLocation>
        <location evidence="1">Golgi apparatus</location>
        <location evidence="1">cis-Golgi network</location>
    </subcellularLocation>
    <subcellularLocation>
        <location evidence="1">Endoplasmic reticulum</location>
    </subcellularLocation>
</comment>
<comment type="similarity">
    <text evidence="2">Belongs to the TRAPP small subunits family. BET3 subfamily.</text>
</comment>
<evidence type="ECO:0000250" key="1"/>
<evidence type="ECO:0000305" key="2"/>
<keyword id="KW-0256">Endoplasmic reticulum</keyword>
<keyword id="KW-0931">ER-Golgi transport</keyword>
<keyword id="KW-0333">Golgi apparatus</keyword>
<keyword id="KW-1185">Reference proteome</keyword>
<keyword id="KW-0813">Transport</keyword>
<sequence length="186" mass="20746">MSKAPVNIVDRPLSKGKGEINISSFAFLFSEMIQYCQDRIKAGHELEKKLSDMGYSIGPRLLELLCVREKNSKRETKLLGILSFIHTTVWKSLFGKPADSLEKSTEADDEYMISDNNMVVNKFISLPKHLSSLNCAAFVAGIIEGILCSAEFPARVTAHNVAVEGKRFPKTVILIKFNPEVIERNA</sequence>
<reference key="1">
    <citation type="journal article" date="2005" name="Nature">
        <title>The genome of the social amoeba Dictyostelium discoideum.</title>
        <authorList>
            <person name="Eichinger L."/>
            <person name="Pachebat J.A."/>
            <person name="Gloeckner G."/>
            <person name="Rajandream M.A."/>
            <person name="Sucgang R."/>
            <person name="Berriman M."/>
            <person name="Song J."/>
            <person name="Olsen R."/>
            <person name="Szafranski K."/>
            <person name="Xu Q."/>
            <person name="Tunggal B."/>
            <person name="Kummerfeld S."/>
            <person name="Madera M."/>
            <person name="Konfortov B.A."/>
            <person name="Rivero F."/>
            <person name="Bankier A.T."/>
            <person name="Lehmann R."/>
            <person name="Hamlin N."/>
            <person name="Davies R."/>
            <person name="Gaudet P."/>
            <person name="Fey P."/>
            <person name="Pilcher K."/>
            <person name="Chen G."/>
            <person name="Saunders D."/>
            <person name="Sodergren E.J."/>
            <person name="Davis P."/>
            <person name="Kerhornou A."/>
            <person name="Nie X."/>
            <person name="Hall N."/>
            <person name="Anjard C."/>
            <person name="Hemphill L."/>
            <person name="Bason N."/>
            <person name="Farbrother P."/>
            <person name="Desany B."/>
            <person name="Just E."/>
            <person name="Morio T."/>
            <person name="Rost R."/>
            <person name="Churcher C.M."/>
            <person name="Cooper J."/>
            <person name="Haydock S."/>
            <person name="van Driessche N."/>
            <person name="Cronin A."/>
            <person name="Goodhead I."/>
            <person name="Muzny D.M."/>
            <person name="Mourier T."/>
            <person name="Pain A."/>
            <person name="Lu M."/>
            <person name="Harper D."/>
            <person name="Lindsay R."/>
            <person name="Hauser H."/>
            <person name="James K.D."/>
            <person name="Quiles M."/>
            <person name="Madan Babu M."/>
            <person name="Saito T."/>
            <person name="Buchrieser C."/>
            <person name="Wardroper A."/>
            <person name="Felder M."/>
            <person name="Thangavelu M."/>
            <person name="Johnson D."/>
            <person name="Knights A."/>
            <person name="Loulseged H."/>
            <person name="Mungall K.L."/>
            <person name="Oliver K."/>
            <person name="Price C."/>
            <person name="Quail M.A."/>
            <person name="Urushihara H."/>
            <person name="Hernandez J."/>
            <person name="Rabbinowitsch E."/>
            <person name="Steffen D."/>
            <person name="Sanders M."/>
            <person name="Ma J."/>
            <person name="Kohara Y."/>
            <person name="Sharp S."/>
            <person name="Simmonds M.N."/>
            <person name="Spiegler S."/>
            <person name="Tivey A."/>
            <person name="Sugano S."/>
            <person name="White B."/>
            <person name="Walker D."/>
            <person name="Woodward J.R."/>
            <person name="Winckler T."/>
            <person name="Tanaka Y."/>
            <person name="Shaulsky G."/>
            <person name="Schleicher M."/>
            <person name="Weinstock G.M."/>
            <person name="Rosenthal A."/>
            <person name="Cox E.C."/>
            <person name="Chisholm R.L."/>
            <person name="Gibbs R.A."/>
            <person name="Loomis W.F."/>
            <person name="Platzer M."/>
            <person name="Kay R.R."/>
            <person name="Williams J.G."/>
            <person name="Dear P.H."/>
            <person name="Noegel A.A."/>
            <person name="Barrell B.G."/>
            <person name="Kuspa A."/>
        </authorList>
    </citation>
    <scope>NUCLEOTIDE SEQUENCE [LARGE SCALE GENOMIC DNA]</scope>
    <source>
        <strain>AX4</strain>
    </source>
</reference>
<protein>
    <recommendedName>
        <fullName>Trafficking protein particle complex subunit 5</fullName>
    </recommendedName>
</protein>
<dbReference type="EMBL" id="AAFI02000023">
    <property type="protein sequence ID" value="EAL68494.1"/>
    <property type="molecule type" value="Genomic_DNA"/>
</dbReference>
<dbReference type="RefSeq" id="XP_642237.1">
    <property type="nucleotide sequence ID" value="XM_637145.1"/>
</dbReference>
<dbReference type="SMR" id="Q54YG5"/>
<dbReference type="FunCoup" id="Q54YG5">
    <property type="interactions" value="413"/>
</dbReference>
<dbReference type="STRING" id="44689.Q54YG5"/>
<dbReference type="PaxDb" id="44689-DDB0218079"/>
<dbReference type="EnsemblProtists" id="EAL68494">
    <property type="protein sequence ID" value="EAL68494"/>
    <property type="gene ID" value="DDB_G0278643"/>
</dbReference>
<dbReference type="GeneID" id="8621446"/>
<dbReference type="KEGG" id="ddi:DDB_G0278643"/>
<dbReference type="dictyBase" id="DDB_G0278643">
    <property type="gene designation" value="trappc5"/>
</dbReference>
<dbReference type="VEuPathDB" id="AmoebaDB:DDB_G0278643"/>
<dbReference type="eggNOG" id="KOG3315">
    <property type="taxonomic scope" value="Eukaryota"/>
</dbReference>
<dbReference type="HOGENOM" id="CLU_073154_2_0_1"/>
<dbReference type="InParanoid" id="Q54YG5"/>
<dbReference type="OMA" id="YMVKFDD"/>
<dbReference type="PhylomeDB" id="Q54YG5"/>
<dbReference type="Reactome" id="R-DDI-204005">
    <property type="pathway name" value="COPII-mediated vesicle transport"/>
</dbReference>
<dbReference type="Reactome" id="R-DDI-8876198">
    <property type="pathway name" value="RAB GEFs exchange GTP for GDP on RABs"/>
</dbReference>
<dbReference type="PRO" id="PR:Q54YG5"/>
<dbReference type="Proteomes" id="UP000002195">
    <property type="component" value="Chromosome 3"/>
</dbReference>
<dbReference type="GO" id="GO:0005783">
    <property type="term" value="C:endoplasmic reticulum"/>
    <property type="evidence" value="ECO:0007669"/>
    <property type="project" value="UniProtKB-SubCell"/>
</dbReference>
<dbReference type="GO" id="GO:1990070">
    <property type="term" value="C:TRAPPI protein complex"/>
    <property type="evidence" value="ECO:0000318"/>
    <property type="project" value="GO_Central"/>
</dbReference>
<dbReference type="GO" id="GO:1990071">
    <property type="term" value="C:TRAPPII protein complex"/>
    <property type="evidence" value="ECO:0000318"/>
    <property type="project" value="GO_Central"/>
</dbReference>
<dbReference type="GO" id="GO:1990072">
    <property type="term" value="C:TRAPPIII protein complex"/>
    <property type="evidence" value="ECO:0000318"/>
    <property type="project" value="GO_Central"/>
</dbReference>
<dbReference type="GO" id="GO:0006888">
    <property type="term" value="P:endoplasmic reticulum to Golgi vesicle-mediated transport"/>
    <property type="evidence" value="ECO:0000318"/>
    <property type="project" value="GO_Central"/>
</dbReference>
<dbReference type="CDD" id="cd14943">
    <property type="entry name" value="TRAPPC5_Trs31"/>
    <property type="match status" value="1"/>
</dbReference>
<dbReference type="FunFam" id="3.30.1380.20:FF:000002">
    <property type="entry name" value="Trafficking protein particle complex subunit"/>
    <property type="match status" value="1"/>
</dbReference>
<dbReference type="Gene3D" id="3.30.1380.20">
    <property type="entry name" value="Trafficking protein particle complex subunit 3"/>
    <property type="match status" value="1"/>
</dbReference>
<dbReference type="InterPro" id="IPR024096">
    <property type="entry name" value="NO_sig/Golgi_transp_ligand-bd"/>
</dbReference>
<dbReference type="InterPro" id="IPR016696">
    <property type="entry name" value="TRAPP-I_su5"/>
</dbReference>
<dbReference type="InterPro" id="IPR007194">
    <property type="entry name" value="TRAPP_component"/>
</dbReference>
<dbReference type="PANTHER" id="PTHR20902">
    <property type="entry name" value="41-2 PROTEIN ANTIGEN-RELATED"/>
    <property type="match status" value="1"/>
</dbReference>
<dbReference type="PANTHER" id="PTHR20902:SF0">
    <property type="entry name" value="TRAFFICKING PROTEIN PARTICLE COMPLEX SUBUNIT 5"/>
    <property type="match status" value="1"/>
</dbReference>
<dbReference type="Pfam" id="PF04051">
    <property type="entry name" value="TRAPP"/>
    <property type="match status" value="1"/>
</dbReference>
<dbReference type="PIRSF" id="PIRSF017479">
    <property type="entry name" value="TRAPP_I_complex_Trs31"/>
    <property type="match status" value="1"/>
</dbReference>
<dbReference type="SUPFAM" id="SSF111126">
    <property type="entry name" value="Ligand-binding domain in the NO signalling and Golgi transport"/>
    <property type="match status" value="1"/>
</dbReference>
<accession>Q54YG5</accession>
<feature type="chain" id="PRO_0000330746" description="Trafficking protein particle complex subunit 5">
    <location>
        <begin position="1"/>
        <end position="186"/>
    </location>
</feature>
<gene>
    <name type="primary">trappc5</name>
    <name type="ORF">DDB_G0278643</name>
</gene>
<proteinExistence type="inferred from homology"/>
<organism>
    <name type="scientific">Dictyostelium discoideum</name>
    <name type="common">Social amoeba</name>
    <dbReference type="NCBI Taxonomy" id="44689"/>
    <lineage>
        <taxon>Eukaryota</taxon>
        <taxon>Amoebozoa</taxon>
        <taxon>Evosea</taxon>
        <taxon>Eumycetozoa</taxon>
        <taxon>Dictyostelia</taxon>
        <taxon>Dictyosteliales</taxon>
        <taxon>Dictyosteliaceae</taxon>
        <taxon>Dictyostelium</taxon>
    </lineage>
</organism>